<dbReference type="EC" id="1.7.1.13" evidence="1"/>
<dbReference type="EMBL" id="CP000946">
    <property type="protein sequence ID" value="ACA76587.1"/>
    <property type="molecule type" value="Genomic_DNA"/>
</dbReference>
<dbReference type="RefSeq" id="WP_000100420.1">
    <property type="nucleotide sequence ID" value="NZ_MTFT01000004.1"/>
</dbReference>
<dbReference type="SMR" id="B1IU47"/>
<dbReference type="GeneID" id="93779204"/>
<dbReference type="KEGG" id="ecl:EcolC_0918"/>
<dbReference type="HOGENOM" id="CLU_054738_0_0_6"/>
<dbReference type="UniPathway" id="UPA00392"/>
<dbReference type="GO" id="GO:0005737">
    <property type="term" value="C:cytoplasm"/>
    <property type="evidence" value="ECO:0007669"/>
    <property type="project" value="UniProtKB-SubCell"/>
</dbReference>
<dbReference type="GO" id="GO:0033739">
    <property type="term" value="F:preQ1 synthase activity"/>
    <property type="evidence" value="ECO:0007669"/>
    <property type="project" value="UniProtKB-UniRule"/>
</dbReference>
<dbReference type="GO" id="GO:0008616">
    <property type="term" value="P:queuosine biosynthetic process"/>
    <property type="evidence" value="ECO:0007669"/>
    <property type="project" value="UniProtKB-UniRule"/>
</dbReference>
<dbReference type="GO" id="GO:0006400">
    <property type="term" value="P:tRNA modification"/>
    <property type="evidence" value="ECO:0007669"/>
    <property type="project" value="UniProtKB-UniRule"/>
</dbReference>
<dbReference type="FunFam" id="3.30.1130.10:FF:000004">
    <property type="entry name" value="NADPH-dependent 7-cyano-7-deazaguanine reductase"/>
    <property type="match status" value="1"/>
</dbReference>
<dbReference type="FunFam" id="3.30.1130.10:FF:000006">
    <property type="entry name" value="NADPH-dependent 7-cyano-7-deazaguanine reductase"/>
    <property type="match status" value="1"/>
</dbReference>
<dbReference type="Gene3D" id="3.30.1130.10">
    <property type="match status" value="2"/>
</dbReference>
<dbReference type="HAMAP" id="MF_00817">
    <property type="entry name" value="QueF_type2"/>
    <property type="match status" value="1"/>
</dbReference>
<dbReference type="InterPro" id="IPR043133">
    <property type="entry name" value="GTP-CH-I_C/QueF"/>
</dbReference>
<dbReference type="InterPro" id="IPR050084">
    <property type="entry name" value="NADPH_dep_7-cyano-7-deazaG_red"/>
</dbReference>
<dbReference type="InterPro" id="IPR029500">
    <property type="entry name" value="QueF"/>
</dbReference>
<dbReference type="InterPro" id="IPR029139">
    <property type="entry name" value="QueF_N"/>
</dbReference>
<dbReference type="InterPro" id="IPR016428">
    <property type="entry name" value="QueF_type2"/>
</dbReference>
<dbReference type="NCBIfam" id="TIGR03138">
    <property type="entry name" value="QueF"/>
    <property type="match status" value="1"/>
</dbReference>
<dbReference type="PANTHER" id="PTHR34354">
    <property type="entry name" value="NADPH-DEPENDENT 7-CYANO-7-DEAZAGUANINE REDUCTASE"/>
    <property type="match status" value="1"/>
</dbReference>
<dbReference type="PANTHER" id="PTHR34354:SF1">
    <property type="entry name" value="NADPH-DEPENDENT 7-CYANO-7-DEAZAGUANINE REDUCTASE"/>
    <property type="match status" value="1"/>
</dbReference>
<dbReference type="Pfam" id="PF14489">
    <property type="entry name" value="QueF"/>
    <property type="match status" value="1"/>
</dbReference>
<dbReference type="Pfam" id="PF14819">
    <property type="entry name" value="QueF_N"/>
    <property type="match status" value="1"/>
</dbReference>
<dbReference type="PIRSF" id="PIRSF004750">
    <property type="entry name" value="Nitrile_oxidored_YqcD_prd"/>
    <property type="match status" value="1"/>
</dbReference>
<dbReference type="SUPFAM" id="SSF55620">
    <property type="entry name" value="Tetrahydrobiopterin biosynthesis enzymes-like"/>
    <property type="match status" value="1"/>
</dbReference>
<proteinExistence type="inferred from homology"/>
<accession>B1IU47</accession>
<organism>
    <name type="scientific">Escherichia coli (strain ATCC 8739 / DSM 1576 / NBRC 3972 / NCIMB 8545 / WDCM 00012 / Crooks)</name>
    <dbReference type="NCBI Taxonomy" id="481805"/>
    <lineage>
        <taxon>Bacteria</taxon>
        <taxon>Pseudomonadati</taxon>
        <taxon>Pseudomonadota</taxon>
        <taxon>Gammaproteobacteria</taxon>
        <taxon>Enterobacterales</taxon>
        <taxon>Enterobacteriaceae</taxon>
        <taxon>Escherichia</taxon>
    </lineage>
</organism>
<evidence type="ECO:0000255" key="1">
    <source>
        <dbReference type="HAMAP-Rule" id="MF_00817"/>
    </source>
</evidence>
<protein>
    <recommendedName>
        <fullName evidence="1">NADPH-dependent 7-cyano-7-deazaguanine reductase</fullName>
        <ecNumber evidence="1">1.7.1.13</ecNumber>
    </recommendedName>
    <alternativeName>
        <fullName evidence="1">7-cyano-7-carbaguanine reductase</fullName>
    </alternativeName>
    <alternativeName>
        <fullName evidence="1">NADPH-dependent nitrile oxidoreductase</fullName>
    </alternativeName>
    <alternativeName>
        <fullName evidence="1">PreQ(0) reductase</fullName>
    </alternativeName>
</protein>
<sequence>MSSYANHQALAGLTLGKSTDYRDTYDASLLQGVPRSLNRDPLGLKADNLPFHGTDIWTLYELSWLNAKGLPQVAVGHVELDYTSVNLIESKSFKLYLNSFNQTRFNNWDEVRQTLERDLSTCAQGKISVALYRLDELEGQPIGHFNGTCIDDQDITIDNYEFTTDYLENATCGEKVVEETLVSHLLKSNCLITHQPDWGSIQIQYRGRQIDREKLLRYLVSFRHHNEFHEQCVERIFNDLLRFCQPEKLSVYARYTRRGGLDINPWRSNSDFVPSTTRLVRQ</sequence>
<name>QUEF_ECOLC</name>
<gene>
    <name evidence="1" type="primary">queF</name>
    <name type="ordered locus">EcolC_0918</name>
</gene>
<keyword id="KW-0963">Cytoplasm</keyword>
<keyword id="KW-0521">NADP</keyword>
<keyword id="KW-0560">Oxidoreductase</keyword>
<keyword id="KW-0671">Queuosine biosynthesis</keyword>
<comment type="function">
    <text evidence="1">Catalyzes the NADPH-dependent reduction of 7-cyano-7-deazaguanine (preQ0) to 7-aminomethyl-7-deazaguanine (preQ1).</text>
</comment>
<comment type="catalytic activity">
    <reaction evidence="1">
        <text>7-aminomethyl-7-carbaguanine + 2 NADP(+) = 7-cyano-7-deazaguanine + 2 NADPH + 3 H(+)</text>
        <dbReference type="Rhea" id="RHEA:13409"/>
        <dbReference type="ChEBI" id="CHEBI:15378"/>
        <dbReference type="ChEBI" id="CHEBI:45075"/>
        <dbReference type="ChEBI" id="CHEBI:57783"/>
        <dbReference type="ChEBI" id="CHEBI:58349"/>
        <dbReference type="ChEBI" id="CHEBI:58703"/>
        <dbReference type="EC" id="1.7.1.13"/>
    </reaction>
</comment>
<comment type="pathway">
    <text evidence="1">tRNA modification; tRNA-queuosine biosynthesis.</text>
</comment>
<comment type="subunit">
    <text evidence="1">Homodimer.</text>
</comment>
<comment type="subcellular location">
    <subcellularLocation>
        <location evidence="1">Cytoplasm</location>
    </subcellularLocation>
</comment>
<comment type="similarity">
    <text evidence="1">Belongs to the GTP cyclohydrolase I family. QueF type 2 subfamily.</text>
</comment>
<reference key="1">
    <citation type="submission" date="2008-02" db="EMBL/GenBank/DDBJ databases">
        <title>Complete sequence of Escherichia coli C str. ATCC 8739.</title>
        <authorList>
            <person name="Copeland A."/>
            <person name="Lucas S."/>
            <person name="Lapidus A."/>
            <person name="Glavina del Rio T."/>
            <person name="Dalin E."/>
            <person name="Tice H."/>
            <person name="Bruce D."/>
            <person name="Goodwin L."/>
            <person name="Pitluck S."/>
            <person name="Kiss H."/>
            <person name="Brettin T."/>
            <person name="Detter J.C."/>
            <person name="Han C."/>
            <person name="Kuske C.R."/>
            <person name="Schmutz J."/>
            <person name="Larimer F."/>
            <person name="Land M."/>
            <person name="Hauser L."/>
            <person name="Kyrpides N."/>
            <person name="Mikhailova N."/>
            <person name="Ingram L."/>
            <person name="Richardson P."/>
        </authorList>
    </citation>
    <scope>NUCLEOTIDE SEQUENCE [LARGE SCALE GENOMIC DNA]</scope>
    <source>
        <strain>ATCC 8739 / DSM 1576 / NBRC 3972 / NCIMB 8545 / WDCM 00012 / Crooks</strain>
    </source>
</reference>
<feature type="chain" id="PRO_1000083826" description="NADPH-dependent 7-cyano-7-deazaguanine reductase">
    <location>
        <begin position="1"/>
        <end position="282"/>
    </location>
</feature>
<feature type="active site" description="Thioimide intermediate" evidence="1">
    <location>
        <position position="190"/>
    </location>
</feature>
<feature type="active site" description="Proton donor" evidence="1">
    <location>
        <position position="197"/>
    </location>
</feature>
<feature type="binding site" evidence="1">
    <location>
        <begin position="88"/>
        <end position="90"/>
    </location>
    <ligand>
        <name>substrate</name>
    </ligand>
</feature>
<feature type="binding site" evidence="1">
    <location>
        <begin position="90"/>
        <end position="91"/>
    </location>
    <ligand>
        <name>NADPH</name>
        <dbReference type="ChEBI" id="CHEBI:57783"/>
    </ligand>
</feature>
<feature type="binding site" evidence="1">
    <location>
        <begin position="229"/>
        <end position="230"/>
    </location>
    <ligand>
        <name>substrate</name>
    </ligand>
</feature>
<feature type="binding site" evidence="1">
    <location>
        <begin position="258"/>
        <end position="259"/>
    </location>
    <ligand>
        <name>NADPH</name>
        <dbReference type="ChEBI" id="CHEBI:57783"/>
    </ligand>
</feature>